<reference key="1">
    <citation type="journal article" date="2009" name="Environ. Microbiol.">
        <title>The genome of Polaromonas naphthalenivorans strain CJ2, isolated from coal tar-contaminated sediment, reveals physiological and metabolic versatility and evolution through extensive horizontal gene transfer.</title>
        <authorList>
            <person name="Yagi J.M."/>
            <person name="Sims D."/>
            <person name="Brettin T."/>
            <person name="Bruce D."/>
            <person name="Madsen E.L."/>
        </authorList>
    </citation>
    <scope>NUCLEOTIDE SEQUENCE [LARGE SCALE GENOMIC DNA]</scope>
    <source>
        <strain>CJ2</strain>
    </source>
</reference>
<feature type="chain" id="PRO_0000303474" description="tRNA N6-adenosine threonylcarbamoyltransferase">
    <location>
        <begin position="1"/>
        <end position="356"/>
    </location>
</feature>
<feature type="binding site" evidence="1">
    <location>
        <position position="115"/>
    </location>
    <ligand>
        <name>Fe cation</name>
        <dbReference type="ChEBI" id="CHEBI:24875"/>
    </ligand>
</feature>
<feature type="binding site" evidence="1">
    <location>
        <position position="119"/>
    </location>
    <ligand>
        <name>Fe cation</name>
        <dbReference type="ChEBI" id="CHEBI:24875"/>
    </ligand>
</feature>
<feature type="binding site" evidence="1">
    <location>
        <begin position="138"/>
        <end position="142"/>
    </location>
    <ligand>
        <name>substrate</name>
    </ligand>
</feature>
<feature type="binding site" evidence="1">
    <location>
        <position position="171"/>
    </location>
    <ligand>
        <name>substrate</name>
    </ligand>
</feature>
<feature type="binding site" evidence="1">
    <location>
        <position position="184"/>
    </location>
    <ligand>
        <name>substrate</name>
    </ligand>
</feature>
<feature type="binding site" evidence="1">
    <location>
        <position position="277"/>
    </location>
    <ligand>
        <name>substrate</name>
    </ligand>
</feature>
<feature type="binding site" evidence="1">
    <location>
        <position position="305"/>
    </location>
    <ligand>
        <name>Fe cation</name>
        <dbReference type="ChEBI" id="CHEBI:24875"/>
    </ligand>
</feature>
<accession>A1VM52</accession>
<dbReference type="EC" id="2.3.1.234" evidence="1"/>
<dbReference type="EMBL" id="CP000529">
    <property type="protein sequence ID" value="ABM36730.1"/>
    <property type="molecule type" value="Genomic_DNA"/>
</dbReference>
<dbReference type="RefSeq" id="WP_011800817.1">
    <property type="nucleotide sequence ID" value="NC_008781.1"/>
</dbReference>
<dbReference type="SMR" id="A1VM52"/>
<dbReference type="STRING" id="365044.Pnap_1416"/>
<dbReference type="KEGG" id="pna:Pnap_1416"/>
<dbReference type="eggNOG" id="COG0533">
    <property type="taxonomic scope" value="Bacteria"/>
</dbReference>
<dbReference type="HOGENOM" id="CLU_023208_0_2_4"/>
<dbReference type="OrthoDB" id="9806197at2"/>
<dbReference type="Proteomes" id="UP000000644">
    <property type="component" value="Chromosome"/>
</dbReference>
<dbReference type="GO" id="GO:0005737">
    <property type="term" value="C:cytoplasm"/>
    <property type="evidence" value="ECO:0007669"/>
    <property type="project" value="UniProtKB-SubCell"/>
</dbReference>
<dbReference type="GO" id="GO:0005506">
    <property type="term" value="F:iron ion binding"/>
    <property type="evidence" value="ECO:0007669"/>
    <property type="project" value="UniProtKB-UniRule"/>
</dbReference>
<dbReference type="GO" id="GO:0061711">
    <property type="term" value="F:N(6)-L-threonylcarbamoyladenine synthase activity"/>
    <property type="evidence" value="ECO:0007669"/>
    <property type="project" value="UniProtKB-EC"/>
</dbReference>
<dbReference type="GO" id="GO:0002949">
    <property type="term" value="P:tRNA threonylcarbamoyladenosine modification"/>
    <property type="evidence" value="ECO:0007669"/>
    <property type="project" value="UniProtKB-UniRule"/>
</dbReference>
<dbReference type="CDD" id="cd24133">
    <property type="entry name" value="ASKHA_NBD_TsaD_bac"/>
    <property type="match status" value="1"/>
</dbReference>
<dbReference type="FunFam" id="3.30.420.40:FF:000012">
    <property type="entry name" value="tRNA N6-adenosine threonylcarbamoyltransferase"/>
    <property type="match status" value="1"/>
</dbReference>
<dbReference type="FunFam" id="3.30.420.40:FF:000040">
    <property type="entry name" value="tRNA N6-adenosine threonylcarbamoyltransferase"/>
    <property type="match status" value="1"/>
</dbReference>
<dbReference type="Gene3D" id="3.30.420.40">
    <property type="match status" value="2"/>
</dbReference>
<dbReference type="HAMAP" id="MF_01445">
    <property type="entry name" value="TsaD"/>
    <property type="match status" value="1"/>
</dbReference>
<dbReference type="InterPro" id="IPR043129">
    <property type="entry name" value="ATPase_NBD"/>
</dbReference>
<dbReference type="InterPro" id="IPR000905">
    <property type="entry name" value="Gcp-like_dom"/>
</dbReference>
<dbReference type="InterPro" id="IPR017861">
    <property type="entry name" value="KAE1/TsaD"/>
</dbReference>
<dbReference type="InterPro" id="IPR017860">
    <property type="entry name" value="Peptidase_M22_CS"/>
</dbReference>
<dbReference type="InterPro" id="IPR022450">
    <property type="entry name" value="TsaD"/>
</dbReference>
<dbReference type="NCBIfam" id="TIGR00329">
    <property type="entry name" value="gcp_kae1"/>
    <property type="match status" value="1"/>
</dbReference>
<dbReference type="NCBIfam" id="TIGR03723">
    <property type="entry name" value="T6A_TsaD_YgjD"/>
    <property type="match status" value="1"/>
</dbReference>
<dbReference type="PANTHER" id="PTHR11735">
    <property type="entry name" value="TRNA N6-ADENOSINE THREONYLCARBAMOYLTRANSFERASE"/>
    <property type="match status" value="1"/>
</dbReference>
<dbReference type="PANTHER" id="PTHR11735:SF6">
    <property type="entry name" value="TRNA N6-ADENOSINE THREONYLCARBAMOYLTRANSFERASE, MITOCHONDRIAL"/>
    <property type="match status" value="1"/>
</dbReference>
<dbReference type="Pfam" id="PF00814">
    <property type="entry name" value="TsaD"/>
    <property type="match status" value="1"/>
</dbReference>
<dbReference type="PRINTS" id="PR00789">
    <property type="entry name" value="OSIALOPTASE"/>
</dbReference>
<dbReference type="SUPFAM" id="SSF53067">
    <property type="entry name" value="Actin-like ATPase domain"/>
    <property type="match status" value="2"/>
</dbReference>
<dbReference type="PROSITE" id="PS01016">
    <property type="entry name" value="GLYCOPROTEASE"/>
    <property type="match status" value="1"/>
</dbReference>
<sequence>MLVLGIESSCDETGVALVDTSASPTPCLLAHALYSQIAMHQPYGGVVPELASRDHIRRVLPLTQDVMKSAQHTLADVDVIAYTRGPGLAGALLVGAGVACSLAAALGKPAMGVHHLEGHLLSPFLSADPPEFPFVALLVSGGHTQLMRVDRVGSYELLGETIDDAAGEAFDKSAKLMGMPYPGGPHLARLALGGDGAAFKLPRPLLHSGNLDFSFAGLKTAVLTQAKKLGTELESRKADLAASTQAAIVEVLVKKTLAALSQTALKRLVVAGGVGANALLRSQLNAACQQRGIRVHYPELEFCTDNGAMIAMAAGMRLQAGLVNLDALRGSYTFDVKPRWNLSEFQSEPALATQNA</sequence>
<proteinExistence type="inferred from homology"/>
<keyword id="KW-0012">Acyltransferase</keyword>
<keyword id="KW-0963">Cytoplasm</keyword>
<keyword id="KW-0408">Iron</keyword>
<keyword id="KW-0479">Metal-binding</keyword>
<keyword id="KW-1185">Reference proteome</keyword>
<keyword id="KW-0808">Transferase</keyword>
<keyword id="KW-0819">tRNA processing</keyword>
<evidence type="ECO:0000255" key="1">
    <source>
        <dbReference type="HAMAP-Rule" id="MF_01445"/>
    </source>
</evidence>
<comment type="function">
    <text evidence="1">Required for the formation of a threonylcarbamoyl group on adenosine at position 37 (t(6)A37) in tRNAs that read codons beginning with adenine. Is involved in the transfer of the threonylcarbamoyl moiety of threonylcarbamoyl-AMP (TC-AMP) to the N6 group of A37, together with TsaE and TsaB. TsaD likely plays a direct catalytic role in this reaction.</text>
</comment>
<comment type="catalytic activity">
    <reaction evidence="1">
        <text>L-threonylcarbamoyladenylate + adenosine(37) in tRNA = N(6)-L-threonylcarbamoyladenosine(37) in tRNA + AMP + H(+)</text>
        <dbReference type="Rhea" id="RHEA:37059"/>
        <dbReference type="Rhea" id="RHEA-COMP:10162"/>
        <dbReference type="Rhea" id="RHEA-COMP:10163"/>
        <dbReference type="ChEBI" id="CHEBI:15378"/>
        <dbReference type="ChEBI" id="CHEBI:73682"/>
        <dbReference type="ChEBI" id="CHEBI:74411"/>
        <dbReference type="ChEBI" id="CHEBI:74418"/>
        <dbReference type="ChEBI" id="CHEBI:456215"/>
        <dbReference type="EC" id="2.3.1.234"/>
    </reaction>
</comment>
<comment type="cofactor">
    <cofactor evidence="1">
        <name>Fe(2+)</name>
        <dbReference type="ChEBI" id="CHEBI:29033"/>
    </cofactor>
    <text evidence="1">Binds 1 Fe(2+) ion per subunit.</text>
</comment>
<comment type="subcellular location">
    <subcellularLocation>
        <location evidence="1">Cytoplasm</location>
    </subcellularLocation>
</comment>
<comment type="similarity">
    <text evidence="1">Belongs to the KAE1 / TsaD family.</text>
</comment>
<gene>
    <name evidence="1" type="primary">tsaD</name>
    <name type="synonym">gcp</name>
    <name type="ordered locus">Pnap_1416</name>
</gene>
<protein>
    <recommendedName>
        <fullName evidence="1">tRNA N6-adenosine threonylcarbamoyltransferase</fullName>
        <ecNumber evidence="1">2.3.1.234</ecNumber>
    </recommendedName>
    <alternativeName>
        <fullName evidence="1">N6-L-threonylcarbamoyladenine synthase</fullName>
        <shortName evidence="1">t(6)A synthase</shortName>
    </alternativeName>
    <alternativeName>
        <fullName evidence="1">t(6)A37 threonylcarbamoyladenosine biosynthesis protein TsaD</fullName>
    </alternativeName>
    <alternativeName>
        <fullName evidence="1">tRNA threonylcarbamoyladenosine biosynthesis protein TsaD</fullName>
    </alternativeName>
</protein>
<organism>
    <name type="scientific">Polaromonas naphthalenivorans (strain CJ2)</name>
    <dbReference type="NCBI Taxonomy" id="365044"/>
    <lineage>
        <taxon>Bacteria</taxon>
        <taxon>Pseudomonadati</taxon>
        <taxon>Pseudomonadota</taxon>
        <taxon>Betaproteobacteria</taxon>
        <taxon>Burkholderiales</taxon>
        <taxon>Comamonadaceae</taxon>
        <taxon>Polaromonas</taxon>
    </lineage>
</organism>
<name>TSAD_POLNA</name>